<comment type="similarity">
    <text evidence="1">Belongs to the UPF0254 family.</text>
</comment>
<protein>
    <recommendedName>
        <fullName evidence="1">UPF0254 protein MmarC6_1720</fullName>
    </recommendedName>
</protein>
<feature type="chain" id="PRO_1000147676" description="UPF0254 protein MmarC6_1720">
    <location>
        <begin position="1"/>
        <end position="165"/>
    </location>
</feature>
<evidence type="ECO:0000255" key="1">
    <source>
        <dbReference type="HAMAP-Rule" id="MF_00673"/>
    </source>
</evidence>
<gene>
    <name type="ordered locus">MmarC6_1720</name>
</gene>
<proteinExistence type="inferred from homology"/>
<sequence>MISVATAECFTHGKIGIKIHKMACGYREFEKDPNYSIINGNVFVIASMFLPSKKGIESILDVKLPEPDYVFKYSKAYNQENDILVAKMVANALKNKLNCDIAISSTAGVGNGAICILTDKNEYNFTSDIYGDLIKGENILKRQDNGVNKAFNTFVEILKKEYGLK</sequence>
<reference key="1">
    <citation type="submission" date="2007-10" db="EMBL/GenBank/DDBJ databases">
        <title>Complete sequence of Methanococcus maripaludis C6.</title>
        <authorList>
            <consortium name="US DOE Joint Genome Institute"/>
            <person name="Copeland A."/>
            <person name="Lucas S."/>
            <person name="Lapidus A."/>
            <person name="Barry K."/>
            <person name="Glavina del Rio T."/>
            <person name="Dalin E."/>
            <person name="Tice H."/>
            <person name="Pitluck S."/>
            <person name="Clum A."/>
            <person name="Schmutz J."/>
            <person name="Larimer F."/>
            <person name="Land M."/>
            <person name="Hauser L."/>
            <person name="Kyrpides N."/>
            <person name="Mikhailova N."/>
            <person name="Sieprawska-Lupa M."/>
            <person name="Whitman W.B."/>
            <person name="Richardson P."/>
        </authorList>
    </citation>
    <scope>NUCLEOTIDE SEQUENCE [LARGE SCALE GENOMIC DNA]</scope>
    <source>
        <strain>C6 / ATCC BAA-1332</strain>
    </source>
</reference>
<name>Y1720_METM6</name>
<accession>A9AB09</accession>
<dbReference type="EMBL" id="CP000867">
    <property type="protein sequence ID" value="ABX02532.1"/>
    <property type="molecule type" value="Genomic_DNA"/>
</dbReference>
<dbReference type="SMR" id="A9AB09"/>
<dbReference type="STRING" id="444158.MmarC6_1720"/>
<dbReference type="KEGG" id="mmx:MmarC6_1720"/>
<dbReference type="eggNOG" id="arCOG04865">
    <property type="taxonomic scope" value="Archaea"/>
</dbReference>
<dbReference type="HOGENOM" id="CLU_1451416_0_0_2"/>
<dbReference type="OrthoDB" id="59686at2157"/>
<dbReference type="HAMAP" id="MF_00673">
    <property type="entry name" value="UPF0254"/>
    <property type="match status" value="1"/>
</dbReference>
<dbReference type="InterPro" id="IPR009625">
    <property type="entry name" value="HcgF"/>
</dbReference>
<dbReference type="NCBIfam" id="NF002122">
    <property type="entry name" value="PRK00962.1"/>
    <property type="match status" value="1"/>
</dbReference>
<dbReference type="Pfam" id="PF06787">
    <property type="entry name" value="HcgF"/>
    <property type="match status" value="1"/>
</dbReference>
<organism>
    <name type="scientific">Methanococcus maripaludis (strain C6 / ATCC BAA-1332)</name>
    <dbReference type="NCBI Taxonomy" id="444158"/>
    <lineage>
        <taxon>Archaea</taxon>
        <taxon>Methanobacteriati</taxon>
        <taxon>Methanobacteriota</taxon>
        <taxon>Methanomada group</taxon>
        <taxon>Methanococci</taxon>
        <taxon>Methanococcales</taxon>
        <taxon>Methanococcaceae</taxon>
        <taxon>Methanococcus</taxon>
    </lineage>
</organism>